<dbReference type="EC" id="1.14.99.56" evidence="6"/>
<dbReference type="EMBL" id="MK135887">
    <property type="protein sequence ID" value="QDV60870.1"/>
    <property type="molecule type" value="Genomic_DNA"/>
</dbReference>
<dbReference type="PDB" id="7NTL">
    <property type="method" value="X-ray"/>
    <property type="resolution" value="1.38 A"/>
    <property type="chains" value="A=21-242"/>
</dbReference>
<dbReference type="PDBsum" id="7NTL"/>
<dbReference type="SMR" id="A0A5J6BJN2"/>
<dbReference type="GO" id="GO:0005576">
    <property type="term" value="C:extracellular region"/>
    <property type="evidence" value="ECO:0007669"/>
    <property type="project" value="UniProtKB-SubCell"/>
</dbReference>
<dbReference type="GO" id="GO:0046872">
    <property type="term" value="F:metal ion binding"/>
    <property type="evidence" value="ECO:0007669"/>
    <property type="project" value="UniProtKB-KW"/>
</dbReference>
<dbReference type="GO" id="GO:0004497">
    <property type="term" value="F:monooxygenase activity"/>
    <property type="evidence" value="ECO:0007669"/>
    <property type="project" value="UniProtKB-KW"/>
</dbReference>
<dbReference type="GO" id="GO:0030245">
    <property type="term" value="P:cellulose catabolic process"/>
    <property type="evidence" value="ECO:0007669"/>
    <property type="project" value="UniProtKB-KW"/>
</dbReference>
<dbReference type="CDD" id="cd21175">
    <property type="entry name" value="LPMO_AA9"/>
    <property type="match status" value="1"/>
</dbReference>
<dbReference type="Gene3D" id="2.70.50.70">
    <property type="match status" value="1"/>
</dbReference>
<dbReference type="InterPro" id="IPR049892">
    <property type="entry name" value="AA9"/>
</dbReference>
<dbReference type="InterPro" id="IPR005103">
    <property type="entry name" value="AA9_LPMO"/>
</dbReference>
<dbReference type="PANTHER" id="PTHR33353:SF34">
    <property type="entry name" value="ENDO-BETA-1,4-GLUCANASE D"/>
    <property type="match status" value="1"/>
</dbReference>
<dbReference type="PANTHER" id="PTHR33353">
    <property type="entry name" value="PUTATIVE (AFU_ORTHOLOGUE AFUA_1G12560)-RELATED"/>
    <property type="match status" value="1"/>
</dbReference>
<dbReference type="Pfam" id="PF03443">
    <property type="entry name" value="AA9"/>
    <property type="match status" value="1"/>
</dbReference>
<sequence>MVQFKLSTASLLALASYAAAHGYVSSIQADGQTYPGADPHNPNPESPGWQAENTDLGFVEPSAFSTPAIACHKNARAPPAHATVQAGSTIKLTWNTWPESHHGPVLDYIAPCNGDCSSASAGSLNFVKIAEKGLISGSNPGFWAADELIQNGNSWEVTIPANLAPGKYVLRHEIIALHSAGNPNGAQAYPQCINLEVTGGGSATPSGQPATSFYSPNDPGILFNLYQSFDSYPIPGPAVWSG</sequence>
<evidence type="ECO:0000250" key="1">
    <source>
        <dbReference type="UniProtKB" id="Q1K8B6"/>
    </source>
</evidence>
<evidence type="ECO:0000250" key="2">
    <source>
        <dbReference type="UniProtKB" id="Q7Z9M7"/>
    </source>
</evidence>
<evidence type="ECO:0000255" key="3"/>
<evidence type="ECO:0000256" key="4">
    <source>
        <dbReference type="SAM" id="MobiDB-lite"/>
    </source>
</evidence>
<evidence type="ECO:0000269" key="5">
    <source>
    </source>
</evidence>
<evidence type="ECO:0000269" key="6">
    <source>
    </source>
</evidence>
<evidence type="ECO:0000269" key="7">
    <source>
    </source>
</evidence>
<evidence type="ECO:0000303" key="8">
    <source>
    </source>
</evidence>
<evidence type="ECO:0000305" key="9"/>
<evidence type="ECO:0000305" key="10">
    <source>
    </source>
</evidence>
<evidence type="ECO:0007744" key="11">
    <source>
        <dbReference type="PDB" id="7NTL"/>
    </source>
</evidence>
<evidence type="ECO:0007829" key="12">
    <source>
        <dbReference type="PDB" id="7NTL"/>
    </source>
</evidence>
<protein>
    <recommendedName>
        <fullName evidence="8">AA9 family lytic polysaccharide monooxygenase F</fullName>
        <shortName evidence="8">AA9F</shortName>
        <shortName evidence="8">LPMO9F</shortName>
        <ecNumber evidence="6">1.14.99.56</ecNumber>
    </recommendedName>
    <alternativeName>
        <fullName evidence="9">Cellulase LPMO9F</fullName>
    </alternativeName>
    <alternativeName>
        <fullName evidence="9">Endo-beta-1,4-glucanase LPMO9F</fullName>
        <shortName evidence="9">Endoglucanase LPMO9F</shortName>
    </alternativeName>
    <alternativeName>
        <fullName evidence="9">Glycosyl hydrolase 61 family protein LPMO9F</fullName>
    </alternativeName>
</protein>
<proteinExistence type="evidence at protein level"/>
<reference key="1">
    <citation type="journal article" date="2019" name="Appl. Environ. Microbiol.">
        <title>Specific xylan activity revealed for AA9 lytic polysaccharide monooxygenases of the thermophilic fungus Malbranchea cinnamomea by functional characterization.</title>
        <authorList>
            <person name="Huettner S."/>
            <person name="Varnai A."/>
            <person name="Petrovic D.M."/>
            <person name="Bach C.X."/>
            <person name="Kim Anh D.T."/>
            <person name="Thanh V.N."/>
            <person name="Eijsink V.G.H."/>
            <person name="Larsbrink J."/>
            <person name="Olsson L."/>
        </authorList>
    </citation>
    <scope>NUCLEOTIDE SEQUENCE [GENOMIC DNA]</scope>
    <scope>FUNCTION</scope>
    <scope>CATALYTIC ACTIVITY</scope>
    <source>
        <strain>FCH 10.5</strain>
    </source>
</reference>
<reference key="2">
    <citation type="journal article" date="2017" name="Biotechnol. Biofuels">
        <title>Combined genome and transcriptome sequencing to investigate the plant cell wall degrading enzyme system in the thermophilic fungus Malbranchea cinnamomea.</title>
        <authorList>
            <person name="Huettner S."/>
            <person name="Nguyen T.T."/>
            <person name="Granchi Z."/>
            <person name="Chin-A-Woeng T."/>
            <person name="Ahren D."/>
            <person name="Larsbrink J."/>
            <person name="Thanh V.N."/>
            <person name="Olsson L."/>
        </authorList>
    </citation>
    <scope>INDUCTION</scope>
</reference>
<reference evidence="11" key="3">
    <citation type="journal article" date="2021" name="Acta Crystallogr. D Struct. Biol.">
        <title>Structure of a C1/C4-oxidizing AA9 lytic polysaccharide monooxygenase from the thermophilic fungus Malbranchea cinnamomea.</title>
        <authorList>
            <person name="Mazurkewich S."/>
            <person name="Seveso A."/>
            <person name="Huttner S."/>
            <person name="Branden G."/>
            <person name="Larsbrink J."/>
        </authorList>
    </citation>
    <scope>X-RAY CRYSTALLOGRAPHY (1.38 ANGSTROMS) OF 21-242IN COMPLEX WITH COPPER</scope>
    <scope>DISULFIDE BONDS</scope>
    <scope>COFACTOR</scope>
    <scope>DOMAIN</scope>
</reference>
<name>LP9F_MALCI</name>
<gene>
    <name evidence="8" type="primary">LPMO9F</name>
    <name evidence="8" type="synonym">AA9F</name>
</gene>
<comment type="function">
    <text evidence="6">Lytic polysaccharide monooxygenase (LPMO) that depolymerizes crystalline and amorphous polysaccharides via the oxidation of scissile alpha- or beta-(1-4)-glycosidic bonds, yielding C1 or C4 oxidation products (PubMed:31540984). Catalysis by LPMOs requires the reduction of the active-site copper from Cu(II) to Cu(I) by a reducing agent and H(2)O(2) or O(2) as a cosubstrate (PubMed:31540984). Active on hemicelluloses, including xylan, glucomannan, and xyloglucan (PubMed:31540984). Shows clear activity on cellooligosaccharides, generating C4 oxidation products (PubMed:31540984). Has no activity on ivory nut mannan (INM), a linear beta-1,4-linked mannan without substitutions (PubMed:31540984).</text>
</comment>
<comment type="catalytic activity">
    <reaction evidence="6">
        <text>[(1-&gt;4)-beta-D-glucosyl]n+m + reduced acceptor + O2 = 4-dehydro-beta-D-glucosyl-[(1-&gt;4)-beta-D-glucosyl]n-1 + [(1-&gt;4)-beta-D-glucosyl]m + acceptor + H2O.</text>
        <dbReference type="EC" id="1.14.99.56"/>
    </reaction>
</comment>
<comment type="cofactor">
    <cofactor evidence="7">
        <name>Cu(2+)</name>
        <dbReference type="ChEBI" id="CHEBI:29036"/>
    </cofactor>
    <text evidence="7">Binds 1 copper ion per subunit.</text>
</comment>
<comment type="subcellular location">
    <subcellularLocation>
        <location evidence="10">Secreted</location>
    </subcellularLocation>
</comment>
<comment type="induction">
    <text evidence="5">Expression is up-regulated during growth on wheat bran compared to that on glucose (PubMed:29158777). Expression is also highly up-regulated on beechwood xylan as the sole carbon source (PubMed:29158777).</text>
</comment>
<comment type="domain">
    <text evidence="7">Contains a small loop in a region where a large loop has been proposed to govern specificity towards oligosaccharides. The presence of the small loop leads to a considerably flatter and more open surface that is likely to enable the broad specificity of the enzyme.</text>
</comment>
<comment type="biotechnology">
    <text evidence="1">Lignocellulose is the most abundant polymeric composite on Earth and is a recalcitrant but promising renewable substrate for industrial biotechnology applications. Together with cellobiose dehydrogenases (CDHs) an enzymatic system capable of oxidative cellulose cleavage is formed, which increases the efficiency of cellulases and put LPMOs at focus of biofuel research.</text>
</comment>
<comment type="similarity">
    <text evidence="9">Belongs to the polysaccharide monooxygenase AA9 family.</text>
</comment>
<feature type="signal peptide" evidence="3">
    <location>
        <begin position="1"/>
        <end position="20"/>
    </location>
</feature>
<feature type="chain" id="PRO_5023816024" description="AA9 family lytic polysaccharide monooxygenase F">
    <location>
        <begin position="21"/>
        <end position="242"/>
    </location>
</feature>
<feature type="region of interest" description="Disordered" evidence="4">
    <location>
        <begin position="31"/>
        <end position="53"/>
    </location>
</feature>
<feature type="binding site" evidence="2">
    <location>
        <position position="21"/>
    </location>
    <ligand>
        <name>Cu(2+)</name>
        <dbReference type="ChEBI" id="CHEBI:29036"/>
        <note>catalytic</note>
    </ligand>
</feature>
<feature type="binding site" evidence="2">
    <location>
        <position position="101"/>
    </location>
    <ligand>
        <name>Cu(2+)</name>
        <dbReference type="ChEBI" id="CHEBI:29036"/>
        <note>catalytic</note>
    </ligand>
</feature>
<feature type="binding site" evidence="1">
    <location>
        <position position="178"/>
    </location>
    <ligand>
        <name>O2</name>
        <dbReference type="ChEBI" id="CHEBI:15379"/>
    </ligand>
</feature>
<feature type="binding site" evidence="1">
    <location>
        <position position="187"/>
    </location>
    <ligand>
        <name>O2</name>
        <dbReference type="ChEBI" id="CHEBI:15379"/>
    </ligand>
</feature>
<feature type="binding site" evidence="2">
    <location>
        <position position="189"/>
    </location>
    <ligand>
        <name>Cu(2+)</name>
        <dbReference type="ChEBI" id="CHEBI:29036"/>
        <note>catalytic</note>
    </ligand>
</feature>
<feature type="disulfide bond" evidence="7 11">
    <location>
        <begin position="71"/>
        <end position="192"/>
    </location>
</feature>
<feature type="disulfide bond" evidence="7 11">
    <location>
        <begin position="112"/>
        <end position="116"/>
    </location>
</feature>
<feature type="strand" evidence="12">
    <location>
        <begin position="24"/>
        <end position="28"/>
    </location>
</feature>
<feature type="strand" evidence="12">
    <location>
        <begin position="33"/>
        <end position="35"/>
    </location>
</feature>
<feature type="helix" evidence="12">
    <location>
        <begin position="61"/>
        <end position="63"/>
    </location>
</feature>
<feature type="helix" evidence="12">
    <location>
        <begin position="68"/>
        <end position="71"/>
    </location>
</feature>
<feature type="strand" evidence="12">
    <location>
        <begin position="82"/>
        <end position="85"/>
    </location>
</feature>
<feature type="strand" evidence="12">
    <location>
        <begin position="89"/>
        <end position="95"/>
    </location>
</feature>
<feature type="strand" evidence="12">
    <location>
        <begin position="105"/>
        <end position="111"/>
    </location>
</feature>
<feature type="strand" evidence="12">
    <location>
        <begin position="116"/>
        <end position="118"/>
    </location>
</feature>
<feature type="helix" evidence="12">
    <location>
        <begin position="121"/>
        <end position="123"/>
    </location>
</feature>
<feature type="strand" evidence="12">
    <location>
        <begin position="126"/>
        <end position="132"/>
    </location>
</feature>
<feature type="strand" evidence="12">
    <location>
        <begin position="134"/>
        <end position="136"/>
    </location>
</feature>
<feature type="helix" evidence="12">
    <location>
        <begin position="144"/>
        <end position="150"/>
    </location>
</feature>
<feature type="strand" evidence="12">
    <location>
        <begin position="153"/>
        <end position="158"/>
    </location>
</feature>
<feature type="strand" evidence="12">
    <location>
        <begin position="165"/>
        <end position="176"/>
    </location>
</feature>
<feature type="turn" evidence="12">
    <location>
        <begin position="178"/>
        <end position="181"/>
    </location>
</feature>
<feature type="strand" evidence="12">
    <location>
        <begin position="187"/>
        <end position="200"/>
    </location>
</feature>
<feature type="helix" evidence="12">
    <location>
        <begin position="210"/>
        <end position="212"/>
    </location>
</feature>
<feature type="turn" evidence="12">
    <location>
        <begin position="219"/>
        <end position="221"/>
    </location>
</feature>
<feature type="strand" evidence="12">
    <location>
        <begin position="225"/>
        <end position="227"/>
    </location>
</feature>
<accession>A0A5J6BJN2</accession>
<keyword id="KW-0002">3D-structure</keyword>
<keyword id="KW-0119">Carbohydrate metabolism</keyword>
<keyword id="KW-0136">Cellulose degradation</keyword>
<keyword id="KW-0186">Copper</keyword>
<keyword id="KW-1015">Disulfide bond</keyword>
<keyword id="KW-0479">Metal-binding</keyword>
<keyword id="KW-0503">Monooxygenase</keyword>
<keyword id="KW-0560">Oxidoreductase</keyword>
<keyword id="KW-0624">Polysaccharide degradation</keyword>
<keyword id="KW-0964">Secreted</keyword>
<keyword id="KW-0732">Signal</keyword>
<organism>
    <name type="scientific">Malbranchea cinnamomea</name>
    <name type="common">Thermophilic fungus</name>
    <name type="synonym">Malbranchea sulfurea</name>
    <dbReference type="NCBI Taxonomy" id="5041"/>
    <lineage>
        <taxon>Eukaryota</taxon>
        <taxon>Fungi</taxon>
        <taxon>Dikarya</taxon>
        <taxon>Ascomycota</taxon>
        <taxon>Pezizomycotina</taxon>
        <taxon>Eurotiomycetes</taxon>
        <taxon>Eurotiomycetidae</taxon>
        <taxon>Onygenales</taxon>
        <taxon>Malbrancheaceae</taxon>
        <taxon>Malbranchea</taxon>
    </lineage>
</organism>